<feature type="chain" id="PRO_1000211997" description="Uridine kinase">
    <location>
        <begin position="1"/>
        <end position="206"/>
    </location>
</feature>
<feature type="binding site" evidence="1">
    <location>
        <begin position="11"/>
        <end position="18"/>
    </location>
    <ligand>
        <name>ATP</name>
        <dbReference type="ChEBI" id="CHEBI:30616"/>
    </ligand>
</feature>
<protein>
    <recommendedName>
        <fullName evidence="1">Uridine kinase</fullName>
        <ecNumber evidence="1">2.7.1.48</ecNumber>
    </recommendedName>
    <alternativeName>
        <fullName evidence="1">Cytidine monophosphokinase</fullName>
    </alternativeName>
    <alternativeName>
        <fullName evidence="1">Uridine monophosphokinase</fullName>
    </alternativeName>
</protein>
<accession>C3L140</accession>
<name>URK_CLOB6</name>
<keyword id="KW-0067">ATP-binding</keyword>
<keyword id="KW-0963">Cytoplasm</keyword>
<keyword id="KW-0418">Kinase</keyword>
<keyword id="KW-0547">Nucleotide-binding</keyword>
<keyword id="KW-0808">Transferase</keyword>
<evidence type="ECO:0000255" key="1">
    <source>
        <dbReference type="HAMAP-Rule" id="MF_00551"/>
    </source>
</evidence>
<proteinExistence type="inferred from homology"/>
<dbReference type="EC" id="2.7.1.48" evidence="1"/>
<dbReference type="EMBL" id="CP001083">
    <property type="protein sequence ID" value="ACQ53849.1"/>
    <property type="molecule type" value="Genomic_DNA"/>
</dbReference>
<dbReference type="RefSeq" id="WP_004441597.1">
    <property type="nucleotide sequence ID" value="NC_012658.1"/>
</dbReference>
<dbReference type="SMR" id="C3L140"/>
<dbReference type="KEGG" id="cbi:CLJ_B2784"/>
<dbReference type="HOGENOM" id="CLU_021278_1_2_9"/>
<dbReference type="UniPathway" id="UPA00574">
    <property type="reaction ID" value="UER00637"/>
</dbReference>
<dbReference type="UniPathway" id="UPA00579">
    <property type="reaction ID" value="UER00640"/>
</dbReference>
<dbReference type="Proteomes" id="UP000002333">
    <property type="component" value="Chromosome"/>
</dbReference>
<dbReference type="GO" id="GO:0005737">
    <property type="term" value="C:cytoplasm"/>
    <property type="evidence" value="ECO:0007669"/>
    <property type="project" value="UniProtKB-SubCell"/>
</dbReference>
<dbReference type="GO" id="GO:0005524">
    <property type="term" value="F:ATP binding"/>
    <property type="evidence" value="ECO:0007669"/>
    <property type="project" value="UniProtKB-UniRule"/>
</dbReference>
<dbReference type="GO" id="GO:0043771">
    <property type="term" value="F:cytidine kinase activity"/>
    <property type="evidence" value="ECO:0007669"/>
    <property type="project" value="RHEA"/>
</dbReference>
<dbReference type="GO" id="GO:0004849">
    <property type="term" value="F:uridine kinase activity"/>
    <property type="evidence" value="ECO:0007669"/>
    <property type="project" value="UniProtKB-UniRule"/>
</dbReference>
<dbReference type="GO" id="GO:0044211">
    <property type="term" value="P:CTP salvage"/>
    <property type="evidence" value="ECO:0007669"/>
    <property type="project" value="UniProtKB-UniRule"/>
</dbReference>
<dbReference type="GO" id="GO:0044206">
    <property type="term" value="P:UMP salvage"/>
    <property type="evidence" value="ECO:0007669"/>
    <property type="project" value="UniProtKB-UniRule"/>
</dbReference>
<dbReference type="CDD" id="cd02023">
    <property type="entry name" value="UMPK"/>
    <property type="match status" value="1"/>
</dbReference>
<dbReference type="Gene3D" id="3.40.50.300">
    <property type="entry name" value="P-loop containing nucleotide triphosphate hydrolases"/>
    <property type="match status" value="1"/>
</dbReference>
<dbReference type="HAMAP" id="MF_00551">
    <property type="entry name" value="Uridine_kinase"/>
    <property type="match status" value="1"/>
</dbReference>
<dbReference type="InterPro" id="IPR027417">
    <property type="entry name" value="P-loop_NTPase"/>
</dbReference>
<dbReference type="InterPro" id="IPR006083">
    <property type="entry name" value="PRK/URK"/>
</dbReference>
<dbReference type="InterPro" id="IPR026008">
    <property type="entry name" value="Uridine_kinase"/>
</dbReference>
<dbReference type="InterPro" id="IPR000764">
    <property type="entry name" value="Uridine_kinase-like"/>
</dbReference>
<dbReference type="NCBIfam" id="NF004018">
    <property type="entry name" value="PRK05480.1"/>
    <property type="match status" value="1"/>
</dbReference>
<dbReference type="NCBIfam" id="TIGR00235">
    <property type="entry name" value="udk"/>
    <property type="match status" value="1"/>
</dbReference>
<dbReference type="PANTHER" id="PTHR10285">
    <property type="entry name" value="URIDINE KINASE"/>
    <property type="match status" value="1"/>
</dbReference>
<dbReference type="Pfam" id="PF00485">
    <property type="entry name" value="PRK"/>
    <property type="match status" value="1"/>
</dbReference>
<dbReference type="PRINTS" id="PR00988">
    <property type="entry name" value="URIDINKINASE"/>
</dbReference>
<dbReference type="SUPFAM" id="SSF52540">
    <property type="entry name" value="P-loop containing nucleoside triphosphate hydrolases"/>
    <property type="match status" value="1"/>
</dbReference>
<gene>
    <name evidence="1" type="primary">udk</name>
    <name type="ordered locus">CLJ_B2784</name>
</gene>
<organism>
    <name type="scientific">Clostridium botulinum (strain 657 / Type Ba4)</name>
    <dbReference type="NCBI Taxonomy" id="515621"/>
    <lineage>
        <taxon>Bacteria</taxon>
        <taxon>Bacillati</taxon>
        <taxon>Bacillota</taxon>
        <taxon>Clostridia</taxon>
        <taxon>Eubacteriales</taxon>
        <taxon>Clostridiaceae</taxon>
        <taxon>Clostridium</taxon>
    </lineage>
</organism>
<sequence length="206" mass="23860">MKRPVLIGITGGTGSGKSTVAKEIYNKFDEACIAMIEQDSYYKDQSSIPFEERCKKNYDHPDAFDNELLIDHLKNLVDLNVIEKPIYDFEAHNRKEETIKVEPRDIIIVEGILVLQDPRVRELLDIKIYVDTDADVRIIRRLLRDINERGRTVDSVINQYLTVVRPMHMQFIEPSKRYADIIIPEGGHNRVAVDMMVANIKHLLQK</sequence>
<comment type="catalytic activity">
    <reaction evidence="1">
        <text>uridine + ATP = UMP + ADP + H(+)</text>
        <dbReference type="Rhea" id="RHEA:16825"/>
        <dbReference type="ChEBI" id="CHEBI:15378"/>
        <dbReference type="ChEBI" id="CHEBI:16704"/>
        <dbReference type="ChEBI" id="CHEBI:30616"/>
        <dbReference type="ChEBI" id="CHEBI:57865"/>
        <dbReference type="ChEBI" id="CHEBI:456216"/>
        <dbReference type="EC" id="2.7.1.48"/>
    </reaction>
</comment>
<comment type="catalytic activity">
    <reaction evidence="1">
        <text>cytidine + ATP = CMP + ADP + H(+)</text>
        <dbReference type="Rhea" id="RHEA:24674"/>
        <dbReference type="ChEBI" id="CHEBI:15378"/>
        <dbReference type="ChEBI" id="CHEBI:17562"/>
        <dbReference type="ChEBI" id="CHEBI:30616"/>
        <dbReference type="ChEBI" id="CHEBI:60377"/>
        <dbReference type="ChEBI" id="CHEBI:456216"/>
        <dbReference type="EC" id="2.7.1.48"/>
    </reaction>
</comment>
<comment type="pathway">
    <text evidence="1">Pyrimidine metabolism; CTP biosynthesis via salvage pathway; CTP from cytidine: step 1/3.</text>
</comment>
<comment type="pathway">
    <text evidence="1">Pyrimidine metabolism; UMP biosynthesis via salvage pathway; UMP from uridine: step 1/1.</text>
</comment>
<comment type="subcellular location">
    <subcellularLocation>
        <location evidence="1">Cytoplasm</location>
    </subcellularLocation>
</comment>
<comment type="similarity">
    <text evidence="1">Belongs to the uridine kinase family.</text>
</comment>
<reference key="1">
    <citation type="submission" date="2008-05" db="EMBL/GenBank/DDBJ databases">
        <title>Genome sequence of Clostridium botulinum Ba4 strain 657.</title>
        <authorList>
            <person name="Shrivastava S."/>
            <person name="Brown J.L."/>
            <person name="Bruce D."/>
            <person name="Detter C."/>
            <person name="Munk C."/>
            <person name="Smith L.A."/>
            <person name="Smith T.J."/>
            <person name="Sutton G."/>
            <person name="Brettin T.S."/>
        </authorList>
    </citation>
    <scope>NUCLEOTIDE SEQUENCE [LARGE SCALE GENOMIC DNA]</scope>
    <source>
        <strain>657 / Type Ba4</strain>
    </source>
</reference>